<comment type="function">
    <text>Catalyzes the reversible phosphorylation of pyruvate and phosphate. In E.histolytica and C.symbiosus, PPDK functions in the direction of ATP synthesis.</text>
</comment>
<comment type="catalytic activity">
    <reaction>
        <text>pyruvate + phosphate + ATP = phosphoenolpyruvate + AMP + diphosphate + H(+)</text>
        <dbReference type="Rhea" id="RHEA:10756"/>
        <dbReference type="ChEBI" id="CHEBI:15361"/>
        <dbReference type="ChEBI" id="CHEBI:15378"/>
        <dbReference type="ChEBI" id="CHEBI:30616"/>
        <dbReference type="ChEBI" id="CHEBI:33019"/>
        <dbReference type="ChEBI" id="CHEBI:43474"/>
        <dbReference type="ChEBI" id="CHEBI:58702"/>
        <dbReference type="ChEBI" id="CHEBI:456215"/>
        <dbReference type="EC" id="2.7.9.1"/>
    </reaction>
</comment>
<comment type="cofactor">
    <cofactor evidence="6">
        <name>Mg(2+)</name>
        <dbReference type="ChEBI" id="CHEBI:18420"/>
    </cofactor>
</comment>
<comment type="activity regulation">
    <text evidence="1">Activated by light-induced dephosphorylation. Inhibited by dark-induced phosphorylation. Both reactions are catalyzed by PDRP1 (By similarity).</text>
</comment>
<comment type="subunit">
    <text evidence="6">Homodimer.</text>
</comment>
<comment type="domain">
    <text>The N-terminal domain contains the ATP/Pi binding site, the central domain the pyrophosphate/phosphate carrier histidine, and the C-terminal domain the pyruvate binding site.</text>
</comment>
<comment type="PTM">
    <text evidence="1">Phosphorylation of Thr-453 in the dark inactivates the enzyme. Dephosphorylation upon light stimulation reactivates the enzyme (By similarity).</text>
</comment>
<comment type="miscellaneous">
    <text>The reaction takes place in three steps, each mediated by a carrier histidine residue located on the surface of the central domain. The two first partial reactions are catalyzed at an active site located on the N-terminal domain, and the third partial reaction is catalyzed at an active site located on the C-terminal domain. For catalytic turnover, the central domain swivels from the concave surface of the N-terminal domain to that of the C-terminal domain.</text>
</comment>
<comment type="similarity">
    <text evidence="7">Belongs to the PEP-utilizing enzyme family.</text>
</comment>
<dbReference type="EC" id="2.7.9.1" evidence="5"/>
<dbReference type="EMBL" id="M60920">
    <property type="protein sequence ID" value="AAA22917.1"/>
    <property type="molecule type" value="mRNA"/>
</dbReference>
<dbReference type="PIR" id="A36231">
    <property type="entry name" value="KIQAPO"/>
</dbReference>
<dbReference type="PDB" id="1DIK">
    <property type="method" value="X-ray"/>
    <property type="resolution" value="2.30 A"/>
    <property type="chains" value="A=1-874"/>
</dbReference>
<dbReference type="PDB" id="1GGO">
    <property type="method" value="X-ray"/>
    <property type="resolution" value="2.60 A"/>
    <property type="chains" value="A=2-874"/>
</dbReference>
<dbReference type="PDB" id="1JDE">
    <property type="method" value="X-ray"/>
    <property type="resolution" value="2.80 A"/>
    <property type="chains" value="A=2-874"/>
</dbReference>
<dbReference type="PDB" id="1KBL">
    <property type="method" value="X-ray"/>
    <property type="resolution" value="1.94 A"/>
    <property type="chains" value="A=2-874"/>
</dbReference>
<dbReference type="PDB" id="1KC7">
    <property type="method" value="X-ray"/>
    <property type="resolution" value="2.20 A"/>
    <property type="chains" value="A=2-874"/>
</dbReference>
<dbReference type="PDB" id="2DIK">
    <property type="method" value="X-ray"/>
    <property type="resolution" value="2.50 A"/>
    <property type="chains" value="A=2-874"/>
</dbReference>
<dbReference type="PDB" id="2FM4">
    <property type="method" value="NMR"/>
    <property type="chains" value="A=384-511"/>
</dbReference>
<dbReference type="PDB" id="2R82">
    <property type="method" value="X-ray"/>
    <property type="resolution" value="3.60 A"/>
    <property type="chains" value="A=1-874"/>
</dbReference>
<dbReference type="PDBsum" id="1DIK"/>
<dbReference type="PDBsum" id="1GGO"/>
<dbReference type="PDBsum" id="1JDE"/>
<dbReference type="PDBsum" id="1KBL"/>
<dbReference type="PDBsum" id="1KC7"/>
<dbReference type="PDBsum" id="2DIK"/>
<dbReference type="PDBsum" id="2FM4"/>
<dbReference type="PDBsum" id="2R82"/>
<dbReference type="BMRB" id="P22983"/>
<dbReference type="SMR" id="P22983"/>
<dbReference type="DrugBank" id="DB02522">
    <property type="generic name" value="Phosphonopyruvate"/>
</dbReference>
<dbReference type="eggNOG" id="COG0574">
    <property type="taxonomic scope" value="Bacteria"/>
</dbReference>
<dbReference type="eggNOG" id="COG1080">
    <property type="taxonomic scope" value="Bacteria"/>
</dbReference>
<dbReference type="BRENDA" id="2.7.9.1">
    <property type="organism ID" value="772"/>
</dbReference>
<dbReference type="SABIO-RK" id="P22983"/>
<dbReference type="EvolutionaryTrace" id="P22983"/>
<dbReference type="GO" id="GO:0005524">
    <property type="term" value="F:ATP binding"/>
    <property type="evidence" value="ECO:0007669"/>
    <property type="project" value="UniProtKB-KW"/>
</dbReference>
<dbReference type="GO" id="GO:0016301">
    <property type="term" value="F:kinase activity"/>
    <property type="evidence" value="ECO:0007669"/>
    <property type="project" value="UniProtKB-KW"/>
</dbReference>
<dbReference type="GO" id="GO:0046872">
    <property type="term" value="F:metal ion binding"/>
    <property type="evidence" value="ECO:0007669"/>
    <property type="project" value="UniProtKB-KW"/>
</dbReference>
<dbReference type="GO" id="GO:0050242">
    <property type="term" value="F:pyruvate, phosphate dikinase activity"/>
    <property type="evidence" value="ECO:0007669"/>
    <property type="project" value="UniProtKB-EC"/>
</dbReference>
<dbReference type="Gene3D" id="1.20.80.30">
    <property type="match status" value="1"/>
</dbReference>
<dbReference type="Gene3D" id="3.30.1490.20">
    <property type="entry name" value="ATP-grasp fold, A domain"/>
    <property type="match status" value="1"/>
</dbReference>
<dbReference type="Gene3D" id="3.30.470.20">
    <property type="entry name" value="ATP-grasp fold, B domain"/>
    <property type="match status" value="1"/>
</dbReference>
<dbReference type="Gene3D" id="3.20.20.60">
    <property type="entry name" value="Phosphoenolpyruvate-binding domains"/>
    <property type="match status" value="1"/>
</dbReference>
<dbReference type="Gene3D" id="3.50.30.10">
    <property type="entry name" value="Phosphohistidine domain"/>
    <property type="match status" value="1"/>
</dbReference>
<dbReference type="Gene3D" id="1.10.189.10">
    <property type="entry name" value="Pyruvate Phosphate Dikinase, domain 2"/>
    <property type="match status" value="1"/>
</dbReference>
<dbReference type="InterPro" id="IPR013815">
    <property type="entry name" value="ATP_grasp_subdomain_1"/>
</dbReference>
<dbReference type="InterPro" id="IPR008279">
    <property type="entry name" value="PEP-util_enz_mobile_dom"/>
</dbReference>
<dbReference type="InterPro" id="IPR018274">
    <property type="entry name" value="PEP_util_AS"/>
</dbReference>
<dbReference type="InterPro" id="IPR000121">
    <property type="entry name" value="PEP_util_C"/>
</dbReference>
<dbReference type="InterPro" id="IPR023151">
    <property type="entry name" value="PEP_util_CS"/>
</dbReference>
<dbReference type="InterPro" id="IPR036637">
    <property type="entry name" value="Phosphohistidine_dom_sf"/>
</dbReference>
<dbReference type="InterPro" id="IPR002192">
    <property type="entry name" value="PPDK_AMP/ATP-bd"/>
</dbReference>
<dbReference type="InterPro" id="IPR010121">
    <property type="entry name" value="Pyruvate_phosphate_dikinase"/>
</dbReference>
<dbReference type="InterPro" id="IPR015813">
    <property type="entry name" value="Pyrv/PenolPyrv_kinase-like_dom"/>
</dbReference>
<dbReference type="InterPro" id="IPR040442">
    <property type="entry name" value="Pyrv_kinase-like_dom_sf"/>
</dbReference>
<dbReference type="NCBIfam" id="NF004531">
    <property type="entry name" value="PRK05878.1"/>
    <property type="match status" value="1"/>
</dbReference>
<dbReference type="NCBIfam" id="TIGR01828">
    <property type="entry name" value="pyru_phos_dikin"/>
    <property type="match status" value="1"/>
</dbReference>
<dbReference type="PANTHER" id="PTHR22931">
    <property type="entry name" value="PHOSPHOENOLPYRUVATE DIKINASE-RELATED"/>
    <property type="match status" value="1"/>
</dbReference>
<dbReference type="PANTHER" id="PTHR22931:SF9">
    <property type="entry name" value="PYRUVATE, PHOSPHATE DIKINASE 1, CHLOROPLASTIC"/>
    <property type="match status" value="1"/>
</dbReference>
<dbReference type="Pfam" id="PF00391">
    <property type="entry name" value="PEP-utilizers"/>
    <property type="match status" value="1"/>
</dbReference>
<dbReference type="Pfam" id="PF02896">
    <property type="entry name" value="PEP-utilizers_C"/>
    <property type="match status" value="1"/>
</dbReference>
<dbReference type="Pfam" id="PF01326">
    <property type="entry name" value="PPDK_N"/>
    <property type="match status" value="2"/>
</dbReference>
<dbReference type="PIRSF" id="PIRSF000853">
    <property type="entry name" value="PPDK"/>
    <property type="match status" value="1"/>
</dbReference>
<dbReference type="SUPFAM" id="SSF56059">
    <property type="entry name" value="Glutathione synthetase ATP-binding domain-like"/>
    <property type="match status" value="1"/>
</dbReference>
<dbReference type="SUPFAM" id="SSF51621">
    <property type="entry name" value="Phosphoenolpyruvate/pyruvate domain"/>
    <property type="match status" value="1"/>
</dbReference>
<dbReference type="SUPFAM" id="SSF52009">
    <property type="entry name" value="Phosphohistidine domain"/>
    <property type="match status" value="1"/>
</dbReference>
<dbReference type="PROSITE" id="PS00742">
    <property type="entry name" value="PEP_ENZYMES_2"/>
    <property type="match status" value="1"/>
</dbReference>
<dbReference type="PROSITE" id="PS00370">
    <property type="entry name" value="PEP_ENZYMES_PHOS_SITE"/>
    <property type="match status" value="1"/>
</dbReference>
<feature type="initiator methionine" description="Removed" evidence="4">
    <location>
        <position position="1"/>
    </location>
</feature>
<feature type="chain" id="PRO_0000147046" description="Pyruvate, phosphate dikinase">
    <location>
        <begin position="2"/>
        <end position="874"/>
    </location>
</feature>
<feature type="region of interest" description="N-terminal">
    <location>
        <begin position="2"/>
        <end position="340"/>
    </location>
</feature>
<feature type="region of interest" description="Linker 1">
    <location>
        <begin position="340"/>
        <end position="399"/>
    </location>
</feature>
<feature type="region of interest" description="Central">
    <location>
        <begin position="400"/>
        <end position="498"/>
    </location>
</feature>
<feature type="region of interest" description="Linker 2">
    <location>
        <begin position="499"/>
        <end position="533"/>
    </location>
</feature>
<feature type="region of interest" description="C-terminal">
    <location>
        <begin position="534"/>
        <end position="874"/>
    </location>
</feature>
<feature type="active site" description="Tele-phosphohistidine intermediate" evidence="3">
    <location>
        <position position="455"/>
    </location>
</feature>
<feature type="active site" description="Proton donor" evidence="8 9">
    <location>
        <position position="831"/>
    </location>
</feature>
<feature type="binding site" evidence="2">
    <location>
        <position position="92"/>
    </location>
    <ligand>
        <name>ATP</name>
        <dbReference type="ChEBI" id="CHEBI:30616"/>
    </ligand>
</feature>
<feature type="binding site" evidence="6">
    <location>
        <position position="561"/>
    </location>
    <ligand>
        <name>substrate</name>
    </ligand>
</feature>
<feature type="binding site" evidence="6">
    <location>
        <position position="617"/>
    </location>
    <ligand>
        <name>substrate</name>
    </ligand>
</feature>
<feature type="binding site" evidence="6">
    <location>
        <position position="745"/>
    </location>
    <ligand>
        <name>Mg(2+)</name>
        <dbReference type="ChEBI" id="CHEBI:18420"/>
    </ligand>
</feature>
<feature type="binding site" evidence="6">
    <location>
        <position position="745"/>
    </location>
    <ligand>
        <name>substrate</name>
    </ligand>
</feature>
<feature type="binding site" evidence="6">
    <location>
        <position position="766"/>
    </location>
    <ligand>
        <name>substrate</name>
    </ligand>
</feature>
<feature type="binding site" evidence="6">
    <location>
        <position position="767"/>
    </location>
    <ligand>
        <name>substrate</name>
    </ligand>
</feature>
<feature type="binding site" evidence="6">
    <location>
        <position position="768"/>
    </location>
    <ligand>
        <name>substrate</name>
    </ligand>
</feature>
<feature type="binding site" evidence="6">
    <location>
        <position position="769"/>
    </location>
    <ligand>
        <name>Mg(2+)</name>
        <dbReference type="ChEBI" id="CHEBI:18420"/>
    </ligand>
</feature>
<feature type="binding site" evidence="6">
    <location>
        <position position="769"/>
    </location>
    <ligand>
        <name>substrate</name>
    </ligand>
</feature>
<feature type="modified residue" description="Phosphothreonine; by PDRP1" evidence="1">
    <location>
        <position position="453"/>
    </location>
</feature>
<feature type="mutagenesis site" description="Lack of phosphotransfer activity." evidence="5">
    <original>C</original>
    <variation>A</variation>
    <location>
        <position position="831"/>
    </location>
</feature>
<feature type="sequence conflict" description="In Ref. 1; AAA22917." evidence="7" ref="1">
    <original>G</original>
    <variation>A</variation>
    <location>
        <position position="94"/>
    </location>
</feature>
<feature type="sequence conflict" description="In Ref. 1; AAA22917." evidence="7" ref="1">
    <original>A</original>
    <variation>R</variation>
    <location>
        <position position="515"/>
    </location>
</feature>
<feature type="sequence conflict" description="In Ref. 1; AAA22917." evidence="7" ref="1">
    <original>GDPSSVEFCHKVGLNYVSCSPFRVPIARLAAAQAALNNK</original>
    <variation>EILLP</variation>
    <location>
        <begin position="836"/>
        <end position="874"/>
    </location>
</feature>
<feature type="strand" evidence="12">
    <location>
        <begin position="5"/>
        <end position="7"/>
    </location>
</feature>
<feature type="helix" evidence="12">
    <location>
        <begin position="8"/>
        <end position="10"/>
    </location>
</feature>
<feature type="helix" evidence="12">
    <location>
        <begin position="13"/>
        <end position="15"/>
    </location>
</feature>
<feature type="helix" evidence="12">
    <location>
        <begin position="16"/>
        <end position="31"/>
    </location>
</feature>
<feature type="strand" evidence="12">
    <location>
        <begin position="39"/>
        <end position="42"/>
    </location>
</feature>
<feature type="helix" evidence="12">
    <location>
        <begin position="44"/>
        <end position="51"/>
    </location>
</feature>
<feature type="turn" evidence="13">
    <location>
        <begin position="52"/>
        <end position="54"/>
    </location>
</feature>
<feature type="helix" evidence="12">
    <location>
        <begin position="59"/>
        <end position="76"/>
    </location>
</feature>
<feature type="strand" evidence="13">
    <location>
        <begin position="78"/>
        <end position="80"/>
    </location>
</feature>
<feature type="strand" evidence="12">
    <location>
        <begin position="83"/>
        <end position="85"/>
    </location>
</feature>
<feature type="strand" evidence="12">
    <location>
        <begin position="89"/>
        <end position="94"/>
    </location>
</feature>
<feature type="turn" evidence="13">
    <location>
        <begin position="100"/>
        <end position="102"/>
    </location>
</feature>
<feature type="strand" evidence="12">
    <location>
        <begin position="105"/>
        <end position="109"/>
    </location>
</feature>
<feature type="helix" evidence="12">
    <location>
        <begin position="115"/>
        <end position="123"/>
    </location>
</feature>
<feature type="helix" evidence="12">
    <location>
        <begin position="126"/>
        <end position="144"/>
    </location>
</feature>
<feature type="helix" evidence="12">
    <location>
        <begin position="149"/>
        <end position="162"/>
    </location>
</feature>
<feature type="helix" evidence="12">
    <location>
        <begin position="168"/>
        <end position="170"/>
    </location>
</feature>
<feature type="helix" evidence="12">
    <location>
        <begin position="173"/>
        <end position="188"/>
    </location>
</feature>
<feature type="turn" evidence="12">
    <location>
        <begin position="189"/>
        <end position="193"/>
    </location>
</feature>
<feature type="helix" evidence="12">
    <location>
        <begin position="200"/>
        <end position="214"/>
    </location>
</feature>
<feature type="helix" evidence="12">
    <location>
        <begin position="218"/>
        <end position="226"/>
    </location>
</feature>
<feature type="helix" evidence="12">
    <location>
        <begin position="231"/>
        <end position="233"/>
    </location>
</feature>
<feature type="strand" evidence="12">
    <location>
        <begin position="236"/>
        <end position="241"/>
    </location>
</feature>
<feature type="strand" evidence="12">
    <location>
        <begin position="252"/>
        <end position="259"/>
    </location>
</feature>
<feature type="turn" evidence="12">
    <location>
        <begin position="261"/>
        <end position="263"/>
    </location>
</feature>
<feature type="strand" evidence="12">
    <location>
        <begin position="266"/>
        <end position="275"/>
    </location>
</feature>
<feature type="helix" evidence="12">
    <location>
        <begin position="278"/>
        <end position="283"/>
    </location>
</feature>
<feature type="strand" evidence="11">
    <location>
        <begin position="284"/>
        <end position="286"/>
    </location>
</feature>
<feature type="helix" evidence="12">
    <location>
        <begin position="291"/>
        <end position="293"/>
    </location>
</feature>
<feature type="helix" evidence="12">
    <location>
        <begin position="294"/>
        <end position="297"/>
    </location>
</feature>
<feature type="helix" evidence="12">
    <location>
        <begin position="299"/>
        <end position="316"/>
    </location>
</feature>
<feature type="strand" evidence="12">
    <location>
        <begin position="320"/>
        <end position="327"/>
    </location>
</feature>
<feature type="strand" evidence="12">
    <location>
        <begin position="330"/>
        <end position="338"/>
    </location>
</feature>
<feature type="helix" evidence="12">
    <location>
        <begin position="343"/>
        <end position="355"/>
    </location>
</feature>
<feature type="strand" evidence="10">
    <location>
        <begin position="357"/>
        <end position="359"/>
    </location>
</feature>
<feature type="helix" evidence="12">
    <location>
        <begin position="361"/>
        <end position="367"/>
    </location>
</feature>
<feature type="helix" evidence="12">
    <location>
        <begin position="370"/>
        <end position="377"/>
    </location>
</feature>
<feature type="helix" evidence="12">
    <location>
        <begin position="383"/>
        <end position="388"/>
    </location>
</feature>
<feature type="strand" evidence="12">
    <location>
        <begin position="391"/>
        <end position="394"/>
    </location>
</feature>
<feature type="strand" evidence="12">
    <location>
        <begin position="396"/>
        <end position="399"/>
    </location>
</feature>
<feature type="strand" evidence="12">
    <location>
        <begin position="401"/>
        <end position="410"/>
    </location>
</feature>
<feature type="helix" evidence="12">
    <location>
        <begin position="411"/>
        <end position="419"/>
    </location>
</feature>
<feature type="strand" evidence="12">
    <location>
        <begin position="424"/>
        <end position="430"/>
    </location>
</feature>
<feature type="helix" evidence="12">
    <location>
        <begin position="433"/>
        <end position="435"/>
    </location>
</feature>
<feature type="helix" evidence="12">
    <location>
        <begin position="436"/>
        <end position="441"/>
    </location>
</feature>
<feature type="strand" evidence="12">
    <location>
        <begin position="443"/>
        <end position="449"/>
    </location>
</feature>
<feature type="strand" evidence="11">
    <location>
        <begin position="452"/>
        <end position="454"/>
    </location>
</feature>
<feature type="helix" evidence="12">
    <location>
        <begin position="455"/>
        <end position="463"/>
    </location>
</feature>
<feature type="strand" evidence="12">
    <location>
        <begin position="466"/>
        <end position="469"/>
    </location>
</feature>
<feature type="strand" evidence="12">
    <location>
        <begin position="475"/>
        <end position="477"/>
    </location>
</feature>
<feature type="turn" evidence="12">
    <location>
        <begin position="478"/>
        <end position="481"/>
    </location>
</feature>
<feature type="strand" evidence="12">
    <location>
        <begin position="482"/>
        <end position="485"/>
    </location>
</feature>
<feature type="strand" evidence="12">
    <location>
        <begin position="488"/>
        <end position="491"/>
    </location>
</feature>
<feature type="strand" evidence="12">
    <location>
        <begin position="495"/>
        <end position="499"/>
    </location>
</feature>
<feature type="turn" evidence="12">
    <location>
        <begin position="500"/>
        <end position="502"/>
    </location>
</feature>
<feature type="strand" evidence="12">
    <location>
        <begin position="504"/>
        <end position="508"/>
    </location>
</feature>
<feature type="helix" evidence="12">
    <location>
        <begin position="519"/>
        <end position="531"/>
    </location>
</feature>
<feature type="strand" evidence="12">
    <location>
        <begin position="534"/>
        <end position="539"/>
    </location>
</feature>
<feature type="helix" evidence="12">
    <location>
        <begin position="543"/>
        <end position="551"/>
    </location>
</feature>
<feature type="strand" evidence="12">
    <location>
        <begin position="556"/>
        <end position="560"/>
    </location>
</feature>
<feature type="helix" evidence="12">
    <location>
        <begin position="564"/>
        <end position="567"/>
    </location>
</feature>
<feature type="helix" evidence="12">
    <location>
        <begin position="569"/>
        <end position="580"/>
    </location>
</feature>
<feature type="helix" evidence="12">
    <location>
        <begin position="584"/>
        <end position="592"/>
    </location>
</feature>
<feature type="helix" evidence="12">
    <location>
        <begin position="595"/>
        <end position="609"/>
    </location>
</feature>
<feature type="strand" evidence="12">
    <location>
        <begin position="614"/>
        <end position="617"/>
    </location>
</feature>
<feature type="helix" evidence="12">
    <location>
        <begin position="623"/>
        <end position="626"/>
    </location>
</feature>
<feature type="helix" evidence="12">
    <location>
        <begin position="631"/>
        <end position="641"/>
    </location>
</feature>
<feature type="helix" evidence="12">
    <location>
        <begin position="645"/>
        <end position="655"/>
    </location>
</feature>
<feature type="helix" evidence="12">
    <location>
        <begin position="660"/>
        <end position="662"/>
    </location>
</feature>
<feature type="helix" evidence="12">
    <location>
        <begin position="667"/>
        <end position="672"/>
    </location>
</feature>
<feature type="helix" evidence="12">
    <location>
        <begin position="674"/>
        <end position="695"/>
    </location>
</feature>
<feature type="strand" evidence="12">
    <location>
        <begin position="702"/>
        <end position="705"/>
    </location>
</feature>
<feature type="helix" evidence="12">
    <location>
        <begin position="711"/>
        <end position="732"/>
    </location>
</feature>
<feature type="strand" evidence="12">
    <location>
        <begin position="739"/>
        <end position="744"/>
    </location>
</feature>
<feature type="helix" evidence="12">
    <location>
        <begin position="747"/>
        <end position="751"/>
    </location>
</feature>
<feature type="helix" evidence="12">
    <location>
        <begin position="753"/>
        <end position="756"/>
    </location>
</feature>
<feature type="turn" evidence="12">
    <location>
        <begin position="757"/>
        <end position="759"/>
    </location>
</feature>
<feature type="strand" evidence="12">
    <location>
        <begin position="761"/>
        <end position="765"/>
    </location>
</feature>
<feature type="helix" evidence="12">
    <location>
        <begin position="767"/>
        <end position="775"/>
    </location>
</feature>
<feature type="helix" evidence="12">
    <location>
        <begin position="779"/>
        <end position="791"/>
    </location>
</feature>
<feature type="turn" evidence="12">
    <location>
        <begin position="799"/>
        <end position="801"/>
    </location>
</feature>
<feature type="turn" evidence="12">
    <location>
        <begin position="805"/>
        <end position="807"/>
    </location>
</feature>
<feature type="helix" evidence="12">
    <location>
        <begin position="808"/>
        <end position="822"/>
    </location>
</feature>
<feature type="strand" evidence="12">
    <location>
        <begin position="827"/>
        <end position="830"/>
    </location>
</feature>
<feature type="helix" evidence="12">
    <location>
        <begin position="833"/>
        <end position="836"/>
    </location>
</feature>
<feature type="helix" evidence="12">
    <location>
        <begin position="838"/>
        <end position="846"/>
    </location>
</feature>
<feature type="strand" evidence="12">
    <location>
        <begin position="850"/>
        <end position="854"/>
    </location>
</feature>
<feature type="helix" evidence="12">
    <location>
        <begin position="856"/>
        <end position="858"/>
    </location>
</feature>
<feature type="helix" evidence="12">
    <location>
        <begin position="859"/>
        <end position="872"/>
    </location>
</feature>
<reference key="1">
    <citation type="journal article" date="1990" name="Biochemistry">
        <title>Analysis of sequence homologies in plant and bacterial pyruvate phosphate dikinase, enzyme I of the bacterial phosphoenolpyruvate: sugar phosphotransferase system and other PEP-utilizing enzymes. Identification of potential catalytic and regulatory motifs.</title>
        <authorList>
            <person name="Pocalyko D.J."/>
            <person name="Carroll L.J."/>
            <person name="Martin B.M."/>
            <person name="Babbitt P.C."/>
            <person name="Dunaway-Mariano D."/>
        </authorList>
    </citation>
    <scope>NUCLEOTIDE SEQUENCE [GENOMIC DNA]</scope>
    <scope>PROTEIN SEQUENCE OF 2-11; 56-70; 128-134; 226-243; 372-386; 407-415; 652-664 AND 693-702</scope>
</reference>
<reference key="2">
    <citation type="submission" date="2000-09" db="UniProtKB">
        <authorList>
            <person name="Dunaway-Mariano D."/>
            <person name="Ye D."/>
        </authorList>
    </citation>
    <scope>SEQUENCE REVISION TO 94</scope>
</reference>
<reference key="3">
    <citation type="journal article" date="1980" name="Biochemistry">
        <title>Pyruvate phosphate dikinase: sequence of the histidyl peptide, the pyrophosphoryl and phosphoryl carrier.</title>
        <authorList>
            <person name="Goss N.H."/>
            <person name="Evans C.T."/>
            <person name="Wood H.G."/>
        </authorList>
    </citation>
    <scope>PROTEIN SEQUENCE OF 451-462</scope>
</reference>
<reference key="4">
    <citation type="journal article" date="1995" name="Biochemistry">
        <title>Location of the catalytic site for phosphoenolpyruvate formation within the primary structure of Clostridium symbiosum pyruvate phosphate dikinase. 1. Identification of an essential cysteine by chemical modification with [1-14C]bromopyruvate and site-directed mutagenesis.</title>
        <authorList>
            <person name="Xu Y."/>
            <person name="Yankie L."/>
            <person name="Shen L."/>
            <person name="Jung Y.S."/>
            <person name="Mariano P.S."/>
            <person name="Dunaway-Mariano D."/>
            <person name="Martin B.M."/>
        </authorList>
    </citation>
    <scope>CATALYTIC ACTIVITY</scope>
    <scope>ACTIVE SITE CYS-831</scope>
    <scope>MUTAGENESIS OF CYS-831</scope>
</reference>
<reference key="5">
    <citation type="journal article" date="2001" name="Biochemistry">
        <title>Investigation of the role of the domain linkers in separate site catalysis by Clostridium symbiosum pyruvate phosphate dikinase.</title>
        <authorList>
            <person name="Wei M."/>
            <person name="Ye D."/>
            <person name="Dunaway-Mariano D."/>
        </authorList>
    </citation>
    <scope>STRUCTURE</scope>
</reference>
<reference key="6">
    <citation type="journal article" date="2001" name="J. Biol. Chem.">
        <title>Investigation of the catalytic site within the ATP-grasp domain of Clostridium symbiosum pyruvate phosphate dikinase.</title>
        <authorList>
            <person name="Ye D."/>
            <person name="Wei M."/>
            <person name="McGuire M."/>
            <person name="Huang K."/>
            <person name="Kapadia G."/>
            <person name="Herzberg O."/>
            <person name="Martin B.M."/>
            <person name="Dunaway-Mariano D."/>
        </authorList>
    </citation>
    <scope>X-RAY CRYSTALLOGRAPHY (2.8 ANGSTROMS)</scope>
    <scope>ACTIVE SITE HIS-455</scope>
</reference>
<reference key="7">
    <citation type="journal article" date="1996" name="Proc. Natl. Acad. Sci. U.S.A.">
        <title>Swiveling-domain mechanism for enzymatic phosphotransfer between remote reaction sites.</title>
        <authorList>
            <person name="Herzberg O."/>
            <person name="Cheng C.C.H."/>
            <person name="Kapadia G."/>
            <person name="McGuire M."/>
            <person name="Carroll L.J."/>
            <person name="Noh S.J."/>
            <person name="Dunaway-Mariano D."/>
        </authorList>
    </citation>
    <scope>X-RAY CRYSTALLOGRAPHY (2.3 ANGSTROMS) IN COMPLEX WITH SUBSTRATE ANALOG</scope>
    <scope>SEQUENCE REVISION</scope>
    <scope>ACTIVE SITE CYS-831</scope>
    <scope>SUBSTRATE BINDING AT ARG-561; ARG-617; GLU-745; GLY-766; THR-767; ASN-768 AND ASP-769</scope>
    <scope>METAL BINDING AT GLU-745 AND ASP-769</scope>
    <scope>COFACTOR</scope>
</reference>
<reference key="8">
    <citation type="journal article" date="1998" name="Biochemistry">
        <title>Location of the phosphate binding site within Clostridium symbiosum pyruvate phosphate dikinase.</title>
        <authorList>
            <person name="McGuire M."/>
            <person name="Huang K."/>
            <person name="Kapadia G."/>
            <person name="Herzberg O."/>
            <person name="Dunaway-Mariano D."/>
        </authorList>
    </citation>
    <scope>X-RAY CRYSTALLOGRAPHY (2.5 ANGSTROMS)</scope>
    <source>
        <strain>JM101</strain>
    </source>
</reference>
<keyword id="KW-0002">3D-structure</keyword>
<keyword id="KW-0067">ATP-binding</keyword>
<keyword id="KW-0903">Direct protein sequencing</keyword>
<keyword id="KW-0418">Kinase</keyword>
<keyword id="KW-0460">Magnesium</keyword>
<keyword id="KW-0479">Metal-binding</keyword>
<keyword id="KW-0547">Nucleotide-binding</keyword>
<keyword id="KW-0597">Phosphoprotein</keyword>
<keyword id="KW-0808">Transferase</keyword>
<organism>
    <name type="scientific">Clostridium symbiosum</name>
    <name type="common">Bacteroides symbiosus</name>
    <dbReference type="NCBI Taxonomy" id="1512"/>
    <lineage>
        <taxon>Bacteria</taxon>
        <taxon>Bacillati</taxon>
        <taxon>Bacillota</taxon>
        <taxon>Clostridia</taxon>
        <taxon>Lachnospirales</taxon>
        <taxon>Lachnospiraceae</taxon>
    </lineage>
</organism>
<sequence length="874" mass="96654">MAKWVYKFEEGNASMRNLLGGKGCNLAEMTILGMPIPQGFTVTTEACTEYYNSGKQITQEIQDQIFEAITWLEELNGKKFGDTEDPLLVSVRSGARASMPGMMDTILNLGLNDVAVEGFAKKTGNPRFAYDSYRRFIQMYSDVVMEVPKSHFEKIIDAMKEEKGVHFDTDLTADDLKELAEKFKAVYKEAMNGEEFPQEPKDQLMGAVKAVFRSWDNPRAIVYRRMNDIPGDWGTAVNVQTMVFGNKGETSGTGVAFTRNPSTGEKGIYGEYLINAQGEDVVAGVRTPQPITQLENDMPDCYKQFMDLAMKLEKHFRDMQDMEFTIEEGKLYFLQTRNGKRTAPAALQIACDLVDEGMITEEEAVVRIEAKSLDQLLHPTFNPAALKAGEVIGSALPASPGAAAGKVYFTADEAKAAHEKGERVILVRLETSPEDIEGMHAAEGILTVRGGMTSHAAVVARGMGTCCVSGCGEIKINEEAKTFELGGHTFAEGDYISLDGSTGKIYKGDIETQEASVSGSFERIMVWADKFRTLKVRTNADTPEDTLNAVKLGAEGIGLCRTEHMFFEADRIMKIRKMILSDSVEAREEALNELIPFQKGDFKAMYKALEGRPMTVRYLDPPLHEFVPHTEEEQAELAKNMGLTLAEVKAKVDELHEFNPMMGHRGCRLAVTYPEIAKMQTRAVMEAAIEVKEETGIDIVPEIMIPLVGEKKELKFVKDVVVEVAEQVKKEKGSDMQYHIGTMIEIPRAALTADAIAEEAEFFSFGTNDLTQMTFGFSRDDAGKFLDSYYKAKIYESDPFARLDQTGVGQLVEMAVKKGRQTRPGLKCGICGEHGGDPSSVEFCHKVGLNYVSCSPFRVPIARLAAAQAALNNK</sequence>
<accession>P22983</accession>
<protein>
    <recommendedName>
        <fullName>Pyruvate, phosphate dikinase</fullName>
        <ecNumber evidence="5">2.7.9.1</ecNumber>
    </recommendedName>
    <alternativeName>
        <fullName>Pyruvate, orthophosphate dikinase</fullName>
    </alternativeName>
</protein>
<gene>
    <name type="primary">ppdK</name>
</gene>
<proteinExistence type="evidence at protein level"/>
<evidence type="ECO:0000250" key="1"/>
<evidence type="ECO:0000255" key="2"/>
<evidence type="ECO:0000269" key="3">
    <source>
    </source>
</evidence>
<evidence type="ECO:0000269" key="4">
    <source>
    </source>
</evidence>
<evidence type="ECO:0000269" key="5">
    <source>
    </source>
</evidence>
<evidence type="ECO:0000269" key="6">
    <source>
    </source>
</evidence>
<evidence type="ECO:0000305" key="7"/>
<evidence type="ECO:0000305" key="8">
    <source>
    </source>
</evidence>
<evidence type="ECO:0000305" key="9">
    <source>
    </source>
</evidence>
<evidence type="ECO:0007829" key="10">
    <source>
        <dbReference type="PDB" id="1GGO"/>
    </source>
</evidence>
<evidence type="ECO:0007829" key="11">
    <source>
        <dbReference type="PDB" id="1JDE"/>
    </source>
</evidence>
<evidence type="ECO:0007829" key="12">
    <source>
        <dbReference type="PDB" id="1KBL"/>
    </source>
</evidence>
<evidence type="ECO:0007829" key="13">
    <source>
        <dbReference type="PDB" id="1KC7"/>
    </source>
</evidence>
<name>PPDK_CLOSY</name>